<organism>
    <name type="scientific">Prochlorococcus marinus (strain MIT 9313)</name>
    <dbReference type="NCBI Taxonomy" id="74547"/>
    <lineage>
        <taxon>Bacteria</taxon>
        <taxon>Bacillati</taxon>
        <taxon>Cyanobacteriota</taxon>
        <taxon>Cyanophyceae</taxon>
        <taxon>Synechococcales</taxon>
        <taxon>Prochlorococcaceae</taxon>
        <taxon>Prochlorococcus</taxon>
    </lineage>
</organism>
<feature type="chain" id="PRO_0000161495" description="tRNA uridine(34) hydroxylase">
    <location>
        <begin position="1"/>
        <end position="310"/>
    </location>
</feature>
<feature type="domain" description="Rhodanese" evidence="1">
    <location>
        <begin position="134"/>
        <end position="232"/>
    </location>
</feature>
<feature type="active site" description="Cysteine persulfide intermediate" evidence="1">
    <location>
        <position position="192"/>
    </location>
</feature>
<proteinExistence type="inferred from homology"/>
<accession>Q7V6T9</accession>
<evidence type="ECO:0000255" key="1">
    <source>
        <dbReference type="HAMAP-Rule" id="MF_00469"/>
    </source>
</evidence>
<gene>
    <name evidence="1" type="primary">trhO</name>
    <name type="ordered locus">PMT_1055</name>
</gene>
<protein>
    <recommendedName>
        <fullName evidence="1">tRNA uridine(34) hydroxylase</fullName>
        <ecNumber evidence="1">1.14.-.-</ecNumber>
    </recommendedName>
    <alternativeName>
        <fullName evidence="1">tRNA hydroxylation protein O</fullName>
    </alternativeName>
</protein>
<comment type="function">
    <text evidence="1">Catalyzes oxygen-dependent 5-hydroxyuridine (ho5U) modification at position 34 in tRNAs.</text>
</comment>
<comment type="catalytic activity">
    <reaction evidence="1">
        <text>uridine(34) in tRNA + AH2 + O2 = 5-hydroxyuridine(34) in tRNA + A + H2O</text>
        <dbReference type="Rhea" id="RHEA:64224"/>
        <dbReference type="Rhea" id="RHEA-COMP:11727"/>
        <dbReference type="Rhea" id="RHEA-COMP:13381"/>
        <dbReference type="ChEBI" id="CHEBI:13193"/>
        <dbReference type="ChEBI" id="CHEBI:15377"/>
        <dbReference type="ChEBI" id="CHEBI:15379"/>
        <dbReference type="ChEBI" id="CHEBI:17499"/>
        <dbReference type="ChEBI" id="CHEBI:65315"/>
        <dbReference type="ChEBI" id="CHEBI:136877"/>
    </reaction>
</comment>
<comment type="similarity">
    <text evidence="1">Belongs to the TrhO family.</text>
</comment>
<keyword id="KW-0560">Oxidoreductase</keyword>
<keyword id="KW-1185">Reference proteome</keyword>
<keyword id="KW-0819">tRNA processing</keyword>
<reference key="1">
    <citation type="journal article" date="2003" name="Nature">
        <title>Genome divergence in two Prochlorococcus ecotypes reflects oceanic niche differentiation.</title>
        <authorList>
            <person name="Rocap G."/>
            <person name="Larimer F.W."/>
            <person name="Lamerdin J.E."/>
            <person name="Malfatti S."/>
            <person name="Chain P."/>
            <person name="Ahlgren N.A."/>
            <person name="Arellano A."/>
            <person name="Coleman M."/>
            <person name="Hauser L."/>
            <person name="Hess W.R."/>
            <person name="Johnson Z.I."/>
            <person name="Land M.L."/>
            <person name="Lindell D."/>
            <person name="Post A.F."/>
            <person name="Regala W."/>
            <person name="Shah M."/>
            <person name="Shaw S.L."/>
            <person name="Steglich C."/>
            <person name="Sullivan M.B."/>
            <person name="Ting C.S."/>
            <person name="Tolonen A."/>
            <person name="Webb E.A."/>
            <person name="Zinser E.R."/>
            <person name="Chisholm S.W."/>
        </authorList>
    </citation>
    <scope>NUCLEOTIDE SEQUENCE [LARGE SCALE GENOMIC DNA]</scope>
    <source>
        <strain>MIT 9313</strain>
    </source>
</reference>
<sequence>MNLQDDQTSADLFQVATFYSFTAWTEVTIACLLHDLLSLGDEHQLMGTVLLAEEGVNGTICGSVDGVSALLERLESDLIEGLFELKISWTPEQAFRRFKVRRKAEIVTMGLAGLNPSKTVGTYVDAHEWNDLIDDPDTLLIDTRNDYEVAIGEFKGAINPQTKCFRDFPAWVEQQLRSMVKAQTPARIAMYCTGGIRCEKATSYLIEKGFTNVHHLRGGILRYFEEVSQTESRWQGECFVFDQRVALNHQLSPGVHCLCHACGMPLTPEDQTMNSYLPGVQCRHCVDQFSDTDRIRFAERQRQMEHSSRK</sequence>
<dbReference type="EC" id="1.14.-.-" evidence="1"/>
<dbReference type="EMBL" id="BX548175">
    <property type="protein sequence ID" value="CAE21230.1"/>
    <property type="molecule type" value="Genomic_DNA"/>
</dbReference>
<dbReference type="RefSeq" id="WP_011130427.1">
    <property type="nucleotide sequence ID" value="NC_005071.1"/>
</dbReference>
<dbReference type="SMR" id="Q7V6T9"/>
<dbReference type="KEGG" id="pmt:PMT_1055"/>
<dbReference type="eggNOG" id="COG1054">
    <property type="taxonomic scope" value="Bacteria"/>
</dbReference>
<dbReference type="HOGENOM" id="CLU_038878_0_0_3"/>
<dbReference type="OrthoDB" id="9778326at2"/>
<dbReference type="Proteomes" id="UP000001423">
    <property type="component" value="Chromosome"/>
</dbReference>
<dbReference type="GO" id="GO:0016705">
    <property type="term" value="F:oxidoreductase activity, acting on paired donors, with incorporation or reduction of molecular oxygen"/>
    <property type="evidence" value="ECO:0007669"/>
    <property type="project" value="UniProtKB-UniRule"/>
</dbReference>
<dbReference type="GO" id="GO:0006400">
    <property type="term" value="P:tRNA modification"/>
    <property type="evidence" value="ECO:0007669"/>
    <property type="project" value="UniProtKB-UniRule"/>
</dbReference>
<dbReference type="CDD" id="cd01518">
    <property type="entry name" value="RHOD_YceA"/>
    <property type="match status" value="1"/>
</dbReference>
<dbReference type="Gene3D" id="3.30.70.100">
    <property type="match status" value="1"/>
</dbReference>
<dbReference type="Gene3D" id="3.40.250.10">
    <property type="entry name" value="Rhodanese-like domain"/>
    <property type="match status" value="1"/>
</dbReference>
<dbReference type="HAMAP" id="MF_00469">
    <property type="entry name" value="TrhO"/>
    <property type="match status" value="1"/>
</dbReference>
<dbReference type="InterPro" id="IPR001763">
    <property type="entry name" value="Rhodanese-like_dom"/>
</dbReference>
<dbReference type="InterPro" id="IPR036873">
    <property type="entry name" value="Rhodanese-like_dom_sf"/>
</dbReference>
<dbReference type="InterPro" id="IPR020936">
    <property type="entry name" value="TrhO"/>
</dbReference>
<dbReference type="InterPro" id="IPR040503">
    <property type="entry name" value="TRHO_N"/>
</dbReference>
<dbReference type="NCBIfam" id="NF001136">
    <property type="entry name" value="PRK00142.1-4"/>
    <property type="match status" value="1"/>
</dbReference>
<dbReference type="PANTHER" id="PTHR43268:SF3">
    <property type="entry name" value="RHODANESE-LIKE DOMAIN-CONTAINING PROTEIN 7-RELATED"/>
    <property type="match status" value="1"/>
</dbReference>
<dbReference type="PANTHER" id="PTHR43268">
    <property type="entry name" value="THIOSULFATE SULFURTRANSFERASE/RHODANESE-LIKE DOMAIN-CONTAINING PROTEIN 2"/>
    <property type="match status" value="1"/>
</dbReference>
<dbReference type="Pfam" id="PF00581">
    <property type="entry name" value="Rhodanese"/>
    <property type="match status" value="1"/>
</dbReference>
<dbReference type="Pfam" id="PF17773">
    <property type="entry name" value="UPF0176_N"/>
    <property type="match status" value="1"/>
</dbReference>
<dbReference type="SMART" id="SM00450">
    <property type="entry name" value="RHOD"/>
    <property type="match status" value="1"/>
</dbReference>
<dbReference type="SUPFAM" id="SSF52821">
    <property type="entry name" value="Rhodanese/Cell cycle control phosphatase"/>
    <property type="match status" value="1"/>
</dbReference>
<dbReference type="PROSITE" id="PS50206">
    <property type="entry name" value="RHODANESE_3"/>
    <property type="match status" value="1"/>
</dbReference>
<name>TRHO_PROMM</name>